<keyword id="KW-0997">Cell inner membrane</keyword>
<keyword id="KW-1003">Cell membrane</keyword>
<keyword id="KW-0472">Membrane</keyword>
<keyword id="KW-0762">Sugar transport</keyword>
<keyword id="KW-0769">Symport</keyword>
<keyword id="KW-0812">Transmembrane</keyword>
<keyword id="KW-1133">Transmembrane helix</keyword>
<keyword id="KW-0813">Transport</keyword>
<evidence type="ECO:0000250" key="1">
    <source>
        <dbReference type="UniProtKB" id="P02921"/>
    </source>
</evidence>
<evidence type="ECO:0000255" key="2"/>
<evidence type="ECO:0000269" key="3">
    <source>
    </source>
</evidence>
<evidence type="ECO:0000303" key="4">
    <source>
    </source>
</evidence>
<evidence type="ECO:0000305" key="5"/>
<feature type="chain" id="PRO_0000170755" description="Melibiose permease">
    <location>
        <begin position="1"/>
        <end position="471"/>
    </location>
</feature>
<feature type="topological domain" description="Cytoplasmic" evidence="2">
    <location>
        <begin position="1"/>
        <end position="11"/>
    </location>
</feature>
<feature type="transmembrane region" description="Helical" evidence="2">
    <location>
        <begin position="12"/>
        <end position="32"/>
    </location>
</feature>
<feature type="topological domain" description="Periplasmic" evidence="2">
    <location>
        <begin position="33"/>
        <end position="36"/>
    </location>
</feature>
<feature type="transmembrane region" description="Helical" evidence="2">
    <location>
        <begin position="37"/>
        <end position="57"/>
    </location>
</feature>
<feature type="topological domain" description="Cytoplasmic" evidence="2">
    <location>
        <begin position="58"/>
        <end position="79"/>
    </location>
</feature>
<feature type="transmembrane region" description="Helical" evidence="2">
    <location>
        <begin position="80"/>
        <end position="100"/>
    </location>
</feature>
<feature type="topological domain" description="Periplasmic" evidence="2">
    <location>
        <begin position="101"/>
        <end position="106"/>
    </location>
</feature>
<feature type="transmembrane region" description="Helical" evidence="2">
    <location>
        <begin position="107"/>
        <end position="127"/>
    </location>
</feature>
<feature type="topological domain" description="Cytoplasmic" evidence="2">
    <location>
        <begin position="128"/>
        <end position="149"/>
    </location>
</feature>
<feature type="transmembrane region" description="Helical" evidence="2">
    <location>
        <begin position="150"/>
        <end position="170"/>
    </location>
</feature>
<feature type="topological domain" description="Periplasmic" evidence="2">
    <location>
        <begin position="171"/>
        <end position="175"/>
    </location>
</feature>
<feature type="transmembrane region" description="Helical" evidence="2">
    <location>
        <begin position="176"/>
        <end position="196"/>
    </location>
</feature>
<feature type="topological domain" description="Cytoplasmic" evidence="2">
    <location>
        <begin position="197"/>
        <end position="234"/>
    </location>
</feature>
<feature type="transmembrane region" description="Helical" evidence="2">
    <location>
        <begin position="235"/>
        <end position="255"/>
    </location>
</feature>
<feature type="topological domain" description="Periplasmic" evidence="2">
    <location>
        <begin position="256"/>
        <end position="266"/>
    </location>
</feature>
<feature type="transmembrane region" description="Helical" evidence="2">
    <location>
        <begin position="267"/>
        <end position="287"/>
    </location>
</feature>
<feature type="topological domain" description="Cytoplasmic" evidence="2">
    <location>
        <begin position="288"/>
        <end position="296"/>
    </location>
</feature>
<feature type="transmembrane region" description="Helical" evidence="2">
    <location>
        <begin position="297"/>
        <end position="317"/>
    </location>
</feature>
<feature type="topological domain" description="Periplasmic" evidence="2">
    <location>
        <begin position="318"/>
        <end position="323"/>
    </location>
</feature>
<feature type="transmembrane region" description="Helical" evidence="2">
    <location>
        <begin position="324"/>
        <end position="344"/>
    </location>
</feature>
<feature type="topological domain" description="Cytoplasmic" evidence="2">
    <location>
        <begin position="345"/>
        <end position="373"/>
    </location>
</feature>
<feature type="transmembrane region" description="Helical" evidence="2">
    <location>
        <begin position="374"/>
        <end position="394"/>
    </location>
</feature>
<feature type="topological domain" description="Periplasmic" evidence="2">
    <location>
        <begin position="395"/>
        <end position="411"/>
    </location>
</feature>
<feature type="transmembrane region" description="Helical" evidence="2">
    <location>
        <begin position="412"/>
        <end position="432"/>
    </location>
</feature>
<feature type="topological domain" description="Cytoplasmic" evidence="2">
    <location>
        <begin position="433"/>
        <end position="471"/>
    </location>
</feature>
<name>MELB_KLEPN</name>
<organism>
    <name type="scientific">Klebsiella pneumoniae</name>
    <dbReference type="NCBI Taxonomy" id="573"/>
    <lineage>
        <taxon>Bacteria</taxon>
        <taxon>Pseudomonadati</taxon>
        <taxon>Pseudomonadota</taxon>
        <taxon>Gammaproteobacteria</taxon>
        <taxon>Enterobacterales</taxon>
        <taxon>Enterobacteriaceae</taxon>
        <taxon>Klebsiella/Raoultella group</taxon>
        <taxon>Klebsiella</taxon>
        <taxon>Klebsiella pneumoniae complex</taxon>
    </lineage>
</organism>
<gene>
    <name evidence="4" type="primary">melB</name>
</gene>
<reference key="1">
    <citation type="journal article" date="1992" name="J. Biol. Chem.">
        <title>Primary structure and characteristics of the melibiose carrier of Klebsiella pneumoniae.</title>
        <authorList>
            <person name="Hama H."/>
            <person name="Wilson T.H."/>
        </authorList>
    </citation>
    <scope>NUCLEOTIDE SEQUENCE [GENOMIC DNA]</scope>
    <scope>FUNCTION</scope>
    <scope>CATALYTIC ACTIVITY</scope>
    <source>
        <strain>2002</strain>
    </source>
</reference>
<proteinExistence type="evidence at protein level"/>
<dbReference type="EMBL" id="M97257">
    <property type="protein sequence ID" value="AAA25067.1"/>
    <property type="molecule type" value="Genomic_DNA"/>
</dbReference>
<dbReference type="PIR" id="B44166">
    <property type="entry name" value="B44166"/>
</dbReference>
<dbReference type="RefSeq" id="WP_019724884.1">
    <property type="nucleotide sequence ID" value="NZ_WXZN01000001.1"/>
</dbReference>
<dbReference type="SMR" id="Q02581"/>
<dbReference type="GO" id="GO:0005886">
    <property type="term" value="C:plasma membrane"/>
    <property type="evidence" value="ECO:0007669"/>
    <property type="project" value="UniProtKB-SubCell"/>
</dbReference>
<dbReference type="GO" id="GO:0015293">
    <property type="term" value="F:symporter activity"/>
    <property type="evidence" value="ECO:0007669"/>
    <property type="project" value="UniProtKB-KW"/>
</dbReference>
<dbReference type="GO" id="GO:0008643">
    <property type="term" value="P:carbohydrate transport"/>
    <property type="evidence" value="ECO:0007669"/>
    <property type="project" value="InterPro"/>
</dbReference>
<dbReference type="GO" id="GO:0006814">
    <property type="term" value="P:sodium ion transport"/>
    <property type="evidence" value="ECO:0007669"/>
    <property type="project" value="InterPro"/>
</dbReference>
<dbReference type="CDD" id="cd17332">
    <property type="entry name" value="MFS_MelB_like"/>
    <property type="match status" value="1"/>
</dbReference>
<dbReference type="Gene3D" id="1.20.1250.20">
    <property type="entry name" value="MFS general substrate transporter like domains"/>
    <property type="match status" value="1"/>
</dbReference>
<dbReference type="InterPro" id="IPR039672">
    <property type="entry name" value="MFS_2"/>
</dbReference>
<dbReference type="InterPro" id="IPR036259">
    <property type="entry name" value="MFS_trans_sf"/>
</dbReference>
<dbReference type="InterPro" id="IPR001927">
    <property type="entry name" value="Na/Gal_symport"/>
</dbReference>
<dbReference type="InterPro" id="IPR018043">
    <property type="entry name" value="Na/Gal_symport_CS"/>
</dbReference>
<dbReference type="NCBIfam" id="TIGR00792">
    <property type="entry name" value="gph"/>
    <property type="match status" value="1"/>
</dbReference>
<dbReference type="NCBIfam" id="NF007749">
    <property type="entry name" value="PRK10429.1"/>
    <property type="match status" value="1"/>
</dbReference>
<dbReference type="PANTHER" id="PTHR11328">
    <property type="entry name" value="MAJOR FACILITATOR SUPERFAMILY DOMAIN-CONTAINING PROTEIN"/>
    <property type="match status" value="1"/>
</dbReference>
<dbReference type="PANTHER" id="PTHR11328:SF36">
    <property type="entry name" value="MELIBIOSE PERMEASE"/>
    <property type="match status" value="1"/>
</dbReference>
<dbReference type="Pfam" id="PF13347">
    <property type="entry name" value="MFS_2"/>
    <property type="match status" value="1"/>
</dbReference>
<dbReference type="SUPFAM" id="SSF103473">
    <property type="entry name" value="MFS general substrate transporter"/>
    <property type="match status" value="1"/>
</dbReference>
<dbReference type="PROSITE" id="PS00872">
    <property type="entry name" value="NA_GALACTOSIDE_SYMP"/>
    <property type="match status" value="1"/>
</dbReference>
<sequence>MSISMTTKLSYGFGAFGKDFAIGIVYMYLMYYYTDIVGLSVGVVGTLFLVARILDAIADPIMGWIVNCTRSRWGKFKPWILIGTITNSVVLYMLFSAHHFSGGALLAWVWLTYLLWGFTYTIMDVPFWSLVPTITLDKREREQLVPYPRFFASLAGFVTAGVTLPFVNAVGGADRGFGFQMFTLVLIAFFVVSTLVTLRNVHEVYSSDSGVSEDSSHLSLRQMVALIYKNDQLACLLGMALAYNTAANIIAGFAIYYFTYVIGSAEMFPYYMSYAGAANLLTLILFPRLVKGLSRRILWAGASIMPVLGCGVLLLMALGGVYNIALISLAGVLLNIGTALFWVLQVIMVADTVDYGEYTMNIRCESIAYSVQTLVVKAGSAFAAWFIAIVLGIIGYVPNVVQSSHTLLGMQAIMIALPTLFFALTLFLYFRYYKLNGDMLRRIQIHLLDKYRRVPENDVEPERPIVVPNQV</sequence>
<protein>
    <recommendedName>
        <fullName evidence="5">Melibiose permease</fullName>
    </recommendedName>
    <alternativeName>
        <fullName evidence="4">Melibiose carrier</fullName>
    </alternativeName>
    <alternativeName>
        <fullName>Melibiose transporter</fullName>
    </alternativeName>
</protein>
<accession>Q02581</accession>
<comment type="function">
    <text evidence="3">Mediates the transport of melibiose and other galactosides by a symport mechanism. Can use protons and lithium as coupling cations for cotransport, depending on the sugar substrate. It catalyzes proton-melibiose, lithium-lactose, and proton/lithium-methyl-1-thio-beta-D-galactopyranoside (TMG) cotransport. This protein seems to be lacking the ability to recognize sodium cations.</text>
</comment>
<comment type="catalytic activity">
    <reaction evidence="3">
        <text>melibiose(in) + H(+)(in) = melibiose(out) + H(+)(out)</text>
        <dbReference type="Rhea" id="RHEA:28855"/>
        <dbReference type="ChEBI" id="CHEBI:15378"/>
        <dbReference type="ChEBI" id="CHEBI:28053"/>
    </reaction>
</comment>
<comment type="subcellular location">
    <subcellularLocation>
        <location evidence="1">Cell inner membrane</location>
        <topology evidence="1">Multi-pass membrane protein</topology>
    </subcellularLocation>
</comment>
<comment type="similarity">
    <text evidence="5">Belongs to the sodium:galactoside symporter (TC 2.A.2) family.</text>
</comment>